<reference key="1">
    <citation type="journal article" date="2009" name="BMC Genomics">
        <title>Pseudogene accumulation in the evolutionary histories of Salmonella enterica serovars Paratyphi A and Typhi.</title>
        <authorList>
            <person name="Holt K.E."/>
            <person name="Thomson N.R."/>
            <person name="Wain J."/>
            <person name="Langridge G.C."/>
            <person name="Hasan R."/>
            <person name="Bhutta Z.A."/>
            <person name="Quail M.A."/>
            <person name="Norbertczak H."/>
            <person name="Walker D."/>
            <person name="Simmonds M."/>
            <person name="White B."/>
            <person name="Bason N."/>
            <person name="Mungall K."/>
            <person name="Dougan G."/>
            <person name="Parkhill J."/>
        </authorList>
    </citation>
    <scope>NUCLEOTIDE SEQUENCE [LARGE SCALE GENOMIC DNA]</scope>
    <source>
        <strain>AKU_12601</strain>
    </source>
</reference>
<proteinExistence type="inferred from homology"/>
<comment type="function">
    <text evidence="1">Bidirectionally degrades single-stranded DNA into large acid-insoluble oligonucleotides, which are then degraded further into small acid-soluble oligonucleotides.</text>
</comment>
<comment type="catalytic activity">
    <reaction evidence="1">
        <text>Exonucleolytic cleavage in either 5'- to 3'- or 3'- to 5'-direction to yield nucleoside 5'-phosphates.</text>
        <dbReference type="EC" id="3.1.11.6"/>
    </reaction>
</comment>
<comment type="subunit">
    <text evidence="1">Heterooligomer composed of large and small subunits.</text>
</comment>
<comment type="subcellular location">
    <subcellularLocation>
        <location evidence="1">Cytoplasm</location>
    </subcellularLocation>
</comment>
<comment type="similarity">
    <text evidence="1">Belongs to the XseA family.</text>
</comment>
<protein>
    <recommendedName>
        <fullName evidence="1">Exodeoxyribonuclease 7 large subunit</fullName>
        <ecNumber evidence="1">3.1.11.6</ecNumber>
    </recommendedName>
    <alternativeName>
        <fullName evidence="1">Exodeoxyribonuclease VII large subunit</fullName>
        <shortName evidence="1">Exonuclease VII large subunit</shortName>
    </alternativeName>
</protein>
<organism>
    <name type="scientific">Salmonella paratyphi A (strain AKU_12601)</name>
    <dbReference type="NCBI Taxonomy" id="554290"/>
    <lineage>
        <taxon>Bacteria</taxon>
        <taxon>Pseudomonadati</taxon>
        <taxon>Pseudomonadota</taxon>
        <taxon>Gammaproteobacteria</taxon>
        <taxon>Enterobacterales</taxon>
        <taxon>Enterobacteriaceae</taxon>
        <taxon>Salmonella</taxon>
    </lineage>
</organism>
<accession>B5BAZ3</accession>
<dbReference type="EC" id="3.1.11.6" evidence="1"/>
<dbReference type="EMBL" id="FM200053">
    <property type="protein sequence ID" value="CAR58453.1"/>
    <property type="molecule type" value="Genomic_DNA"/>
</dbReference>
<dbReference type="RefSeq" id="WP_000953178.1">
    <property type="nucleotide sequence ID" value="NC_011147.1"/>
</dbReference>
<dbReference type="SMR" id="B5BAZ3"/>
<dbReference type="KEGG" id="sek:SSPA0332"/>
<dbReference type="HOGENOM" id="CLU_023625_3_1_6"/>
<dbReference type="Proteomes" id="UP000001869">
    <property type="component" value="Chromosome"/>
</dbReference>
<dbReference type="GO" id="GO:0005737">
    <property type="term" value="C:cytoplasm"/>
    <property type="evidence" value="ECO:0007669"/>
    <property type="project" value="UniProtKB-SubCell"/>
</dbReference>
<dbReference type="GO" id="GO:0009318">
    <property type="term" value="C:exodeoxyribonuclease VII complex"/>
    <property type="evidence" value="ECO:0007669"/>
    <property type="project" value="InterPro"/>
</dbReference>
<dbReference type="GO" id="GO:0008855">
    <property type="term" value="F:exodeoxyribonuclease VII activity"/>
    <property type="evidence" value="ECO:0007669"/>
    <property type="project" value="UniProtKB-UniRule"/>
</dbReference>
<dbReference type="GO" id="GO:0003676">
    <property type="term" value="F:nucleic acid binding"/>
    <property type="evidence" value="ECO:0007669"/>
    <property type="project" value="InterPro"/>
</dbReference>
<dbReference type="GO" id="GO:0006308">
    <property type="term" value="P:DNA catabolic process"/>
    <property type="evidence" value="ECO:0007669"/>
    <property type="project" value="UniProtKB-UniRule"/>
</dbReference>
<dbReference type="CDD" id="cd04489">
    <property type="entry name" value="ExoVII_LU_OBF"/>
    <property type="match status" value="1"/>
</dbReference>
<dbReference type="HAMAP" id="MF_00378">
    <property type="entry name" value="Exonuc_7_L"/>
    <property type="match status" value="1"/>
</dbReference>
<dbReference type="InterPro" id="IPR003753">
    <property type="entry name" value="Exonuc_VII_L"/>
</dbReference>
<dbReference type="InterPro" id="IPR020579">
    <property type="entry name" value="Exonuc_VII_lsu_C"/>
</dbReference>
<dbReference type="InterPro" id="IPR025824">
    <property type="entry name" value="OB-fold_nuc-bd_dom"/>
</dbReference>
<dbReference type="NCBIfam" id="TIGR00237">
    <property type="entry name" value="xseA"/>
    <property type="match status" value="1"/>
</dbReference>
<dbReference type="PANTHER" id="PTHR30008">
    <property type="entry name" value="EXODEOXYRIBONUCLEASE 7 LARGE SUBUNIT"/>
    <property type="match status" value="1"/>
</dbReference>
<dbReference type="PANTHER" id="PTHR30008:SF0">
    <property type="entry name" value="EXODEOXYRIBONUCLEASE 7 LARGE SUBUNIT"/>
    <property type="match status" value="1"/>
</dbReference>
<dbReference type="Pfam" id="PF02601">
    <property type="entry name" value="Exonuc_VII_L"/>
    <property type="match status" value="1"/>
</dbReference>
<dbReference type="Pfam" id="PF13742">
    <property type="entry name" value="tRNA_anti_2"/>
    <property type="match status" value="1"/>
</dbReference>
<keyword id="KW-0963">Cytoplasm</keyword>
<keyword id="KW-0269">Exonuclease</keyword>
<keyword id="KW-0378">Hydrolase</keyword>
<keyword id="KW-0540">Nuclease</keyword>
<evidence type="ECO:0000255" key="1">
    <source>
        <dbReference type="HAMAP-Rule" id="MF_00378"/>
    </source>
</evidence>
<name>EX7L_SALPK</name>
<gene>
    <name evidence="1" type="primary">xseA</name>
    <name type="ordered locus">SSPA0332</name>
</gene>
<feature type="chain" id="PRO_1000122086" description="Exodeoxyribonuclease 7 large subunit">
    <location>
        <begin position="1"/>
        <end position="449"/>
    </location>
</feature>
<sequence length="449" mass="50639">MLSSQTSSIFTVSRLNQTVRLLLEQEMGQVWISGEISNFTQPASGHWYFTLKDDTAQVRCAMFRNSNRRVTFRPQHGQQVLVRANITLYEPRGDYQVIAESMQPAGEGLLQQKYEQLKAKLQAEGLFDQQHKQPLPSPAHCVGVITSKTGAALHDILHVLKRRDPSLPVIIYPTAVQGDDAPGQIVRAIELANARGECDVLIVGRGGGSLEDLWSFNDERVARAIFASRIPVVSAVGHETDVTIADFVADLRAPTPSAAAEIVSRNQQELLRQIQSAQQRLGMAMDYYLANRSRRFTQIFHRLQQQHPQLRLARQQTALERLRQRMGFALEARIKQANQRQQRVSQRLSQQNPQPRIHRAQSRIQQLEYRLTENIRSRLSEQRERFGNAVTHLEAVSPLATLARGYTVSTTTDGKVLKKIKQVNAGDIMTTRLEDGWLESEVKSVTPGT</sequence>